<feature type="chain" id="PRO_0000409089" description="UDP-glycosyltransferase 76E4">
    <location>
        <begin position="1"/>
        <end position="452"/>
    </location>
</feature>
<feature type="binding site" evidence="1">
    <location>
        <position position="274"/>
    </location>
    <ligand>
        <name>UDP-alpha-D-glucose</name>
        <dbReference type="ChEBI" id="CHEBI:58885"/>
    </ligand>
</feature>
<feature type="binding site" evidence="1">
    <location>
        <begin position="333"/>
        <end position="335"/>
    </location>
    <ligand>
        <name>UDP-alpha-D-glucose</name>
        <dbReference type="ChEBI" id="CHEBI:58885"/>
    </ligand>
</feature>
<feature type="binding site" evidence="1">
    <location>
        <begin position="350"/>
        <end position="358"/>
    </location>
    <ligand>
        <name>UDP-alpha-D-glucose</name>
        <dbReference type="ChEBI" id="CHEBI:58885"/>
    </ligand>
</feature>
<feature type="binding site" evidence="1">
    <location>
        <begin position="372"/>
        <end position="375"/>
    </location>
    <ligand>
        <name>UDP-alpha-D-glucose</name>
        <dbReference type="ChEBI" id="CHEBI:58885"/>
    </ligand>
</feature>
<feature type="sequence conflict" description="In Ref. 3; BAC41861 and 4; AAO63438." evidence="2" ref="3 4">
    <original>E</original>
    <variation>K</variation>
    <location>
        <position position="399"/>
    </location>
</feature>
<sequence>MEKRVEKRRIVLVPVAAQGHVTPMMQLGKALQSKGFLITVAQRQFNQIGSSLQHFPGFDFVTIPESLPQSESKKLGPAEYLMNLNKTSEASFKECISQLSMQQGNDIACIIYDKLMYFCEAAAKEFKIPSVIFSTSSATIQVCYCVLSELSAEKFLIDMKDPEKQDKVLEGLHPLRYKDLPTSGFGPLEPLLEMCREVVNKRTASAVIINTASCLESLSLSWLQQELGIPVYPLGPLHITASSPGPSLLQEDMSCIEWLNKQKPRSVIYISLGTKAHMETKEMLEMAWGLLNSNQPFLWVIRPGSVAGFEWIELLPEEVIKMVTERGYIAKWAPQIEVLGHPAVGGFWSHCGWNSTLESIVEGVPMICRPLQGEQKLNAMYIESVWKIGIQLEGEVEREGVERAVKRLIIDEEGAAMRERALDLKEKLNASVRSGGSSYNALDELVKFLNTE</sequence>
<dbReference type="EC" id="2.4.1.-"/>
<dbReference type="EMBL" id="AL096859">
    <property type="protein sequence ID" value="CAB51196.1"/>
    <property type="molecule type" value="Genomic_DNA"/>
</dbReference>
<dbReference type="EMBL" id="CP002686">
    <property type="protein sequence ID" value="AEE78194.1"/>
    <property type="molecule type" value="Genomic_DNA"/>
</dbReference>
<dbReference type="EMBL" id="AK117184">
    <property type="protein sequence ID" value="BAC41861.1"/>
    <property type="molecule type" value="mRNA"/>
</dbReference>
<dbReference type="EMBL" id="BT005374">
    <property type="protein sequence ID" value="AAO63438.1"/>
    <property type="molecule type" value="mRNA"/>
</dbReference>
<dbReference type="PIR" id="T12981">
    <property type="entry name" value="T12981"/>
</dbReference>
<dbReference type="RefSeq" id="NP_190253.1">
    <property type="nucleotide sequence ID" value="NM_114536.4"/>
</dbReference>
<dbReference type="SMR" id="Q9STE3"/>
<dbReference type="FunCoup" id="Q9STE3">
    <property type="interactions" value="180"/>
</dbReference>
<dbReference type="STRING" id="3702.Q9STE3"/>
<dbReference type="CAZy" id="GT1">
    <property type="family name" value="Glycosyltransferase Family 1"/>
</dbReference>
<dbReference type="PaxDb" id="3702-AT3G46690.1"/>
<dbReference type="ProteomicsDB" id="228649"/>
<dbReference type="EnsemblPlants" id="AT3G46690.1">
    <property type="protein sequence ID" value="AT3G46690.1"/>
    <property type="gene ID" value="AT3G46690"/>
</dbReference>
<dbReference type="GeneID" id="823822"/>
<dbReference type="Gramene" id="AT3G46690.1">
    <property type="protein sequence ID" value="AT3G46690.1"/>
    <property type="gene ID" value="AT3G46690"/>
</dbReference>
<dbReference type="KEGG" id="ath:AT3G46690"/>
<dbReference type="Araport" id="AT3G46690"/>
<dbReference type="TAIR" id="AT3G46690"/>
<dbReference type="eggNOG" id="KOG1192">
    <property type="taxonomic scope" value="Eukaryota"/>
</dbReference>
<dbReference type="HOGENOM" id="CLU_001724_0_0_1"/>
<dbReference type="InParanoid" id="Q9STE3"/>
<dbReference type="OMA" id="PSEWTES"/>
<dbReference type="PhylomeDB" id="Q9STE3"/>
<dbReference type="BioCyc" id="ARA:AT3G46690-MONOMER"/>
<dbReference type="PRO" id="PR:Q9STE3"/>
<dbReference type="Proteomes" id="UP000006548">
    <property type="component" value="Chromosome 3"/>
</dbReference>
<dbReference type="ExpressionAtlas" id="Q9STE3">
    <property type="expression patterns" value="baseline and differential"/>
</dbReference>
<dbReference type="GO" id="GO:0008194">
    <property type="term" value="F:UDP-glycosyltransferase activity"/>
    <property type="evidence" value="ECO:0007669"/>
    <property type="project" value="InterPro"/>
</dbReference>
<dbReference type="CDD" id="cd03784">
    <property type="entry name" value="GT1_Gtf-like"/>
    <property type="match status" value="1"/>
</dbReference>
<dbReference type="FunFam" id="3.40.50.2000:FF:000040">
    <property type="entry name" value="UDP-glycosyltransferase 76C1"/>
    <property type="match status" value="1"/>
</dbReference>
<dbReference type="FunFam" id="3.40.50.2000:FF:000151">
    <property type="entry name" value="UDP-glycosyltransferase 76E9"/>
    <property type="match status" value="1"/>
</dbReference>
<dbReference type="Gene3D" id="3.40.50.2000">
    <property type="entry name" value="Glycogen Phosphorylase B"/>
    <property type="match status" value="2"/>
</dbReference>
<dbReference type="InterPro" id="IPR002213">
    <property type="entry name" value="UDP_glucos_trans"/>
</dbReference>
<dbReference type="PANTHER" id="PTHR11926">
    <property type="entry name" value="GLUCOSYL/GLUCURONOSYL TRANSFERASES"/>
    <property type="match status" value="1"/>
</dbReference>
<dbReference type="PANTHER" id="PTHR11926:SF913">
    <property type="entry name" value="UDP-GLYCOSYLTRANSFERASE SUPERFAMILY PROTEIN-RELATED"/>
    <property type="match status" value="1"/>
</dbReference>
<dbReference type="Pfam" id="PF00201">
    <property type="entry name" value="UDPGT"/>
    <property type="match status" value="1"/>
</dbReference>
<dbReference type="SUPFAM" id="SSF53756">
    <property type="entry name" value="UDP-Glycosyltransferase/glycogen phosphorylase"/>
    <property type="match status" value="1"/>
</dbReference>
<proteinExistence type="evidence at transcript level"/>
<name>U76E4_ARATH</name>
<keyword id="KW-0328">Glycosyltransferase</keyword>
<keyword id="KW-1185">Reference proteome</keyword>
<keyword id="KW-0808">Transferase</keyword>
<gene>
    <name type="primary">UGT76E4</name>
    <name type="ordered locus">At3g46690</name>
    <name type="ORF">T6H20.280</name>
</gene>
<reference key="1">
    <citation type="journal article" date="2000" name="Nature">
        <title>Sequence and analysis of chromosome 3 of the plant Arabidopsis thaliana.</title>
        <authorList>
            <person name="Salanoubat M."/>
            <person name="Lemcke K."/>
            <person name="Rieger M."/>
            <person name="Ansorge W."/>
            <person name="Unseld M."/>
            <person name="Fartmann B."/>
            <person name="Valle G."/>
            <person name="Bloecker H."/>
            <person name="Perez-Alonso M."/>
            <person name="Obermaier B."/>
            <person name="Delseny M."/>
            <person name="Boutry M."/>
            <person name="Grivell L.A."/>
            <person name="Mache R."/>
            <person name="Puigdomenech P."/>
            <person name="De Simone V."/>
            <person name="Choisne N."/>
            <person name="Artiguenave F."/>
            <person name="Robert C."/>
            <person name="Brottier P."/>
            <person name="Wincker P."/>
            <person name="Cattolico L."/>
            <person name="Weissenbach J."/>
            <person name="Saurin W."/>
            <person name="Quetier F."/>
            <person name="Schaefer M."/>
            <person name="Mueller-Auer S."/>
            <person name="Gabel C."/>
            <person name="Fuchs M."/>
            <person name="Benes V."/>
            <person name="Wurmbach E."/>
            <person name="Drzonek H."/>
            <person name="Erfle H."/>
            <person name="Jordan N."/>
            <person name="Bangert S."/>
            <person name="Wiedelmann R."/>
            <person name="Kranz H."/>
            <person name="Voss H."/>
            <person name="Holland R."/>
            <person name="Brandt P."/>
            <person name="Nyakatura G."/>
            <person name="Vezzi A."/>
            <person name="D'Angelo M."/>
            <person name="Pallavicini A."/>
            <person name="Toppo S."/>
            <person name="Simionati B."/>
            <person name="Conrad A."/>
            <person name="Hornischer K."/>
            <person name="Kauer G."/>
            <person name="Loehnert T.-H."/>
            <person name="Nordsiek G."/>
            <person name="Reichelt J."/>
            <person name="Scharfe M."/>
            <person name="Schoen O."/>
            <person name="Bargues M."/>
            <person name="Terol J."/>
            <person name="Climent J."/>
            <person name="Navarro P."/>
            <person name="Collado C."/>
            <person name="Perez-Perez A."/>
            <person name="Ottenwaelder B."/>
            <person name="Duchemin D."/>
            <person name="Cooke R."/>
            <person name="Laudie M."/>
            <person name="Berger-Llauro C."/>
            <person name="Purnelle B."/>
            <person name="Masuy D."/>
            <person name="de Haan M."/>
            <person name="Maarse A.C."/>
            <person name="Alcaraz J.-P."/>
            <person name="Cottet A."/>
            <person name="Casacuberta E."/>
            <person name="Monfort A."/>
            <person name="Argiriou A."/>
            <person name="Flores M."/>
            <person name="Liguori R."/>
            <person name="Vitale D."/>
            <person name="Mannhaupt G."/>
            <person name="Haase D."/>
            <person name="Schoof H."/>
            <person name="Rudd S."/>
            <person name="Zaccaria P."/>
            <person name="Mewes H.-W."/>
            <person name="Mayer K.F.X."/>
            <person name="Kaul S."/>
            <person name="Town C.D."/>
            <person name="Koo H.L."/>
            <person name="Tallon L.J."/>
            <person name="Jenkins J."/>
            <person name="Rooney T."/>
            <person name="Rizzo M."/>
            <person name="Walts A."/>
            <person name="Utterback T."/>
            <person name="Fujii C.Y."/>
            <person name="Shea T.P."/>
            <person name="Creasy T.H."/>
            <person name="Haas B."/>
            <person name="Maiti R."/>
            <person name="Wu D."/>
            <person name="Peterson J."/>
            <person name="Van Aken S."/>
            <person name="Pai G."/>
            <person name="Militscher J."/>
            <person name="Sellers P."/>
            <person name="Gill J.E."/>
            <person name="Feldblyum T.V."/>
            <person name="Preuss D."/>
            <person name="Lin X."/>
            <person name="Nierman W.C."/>
            <person name="Salzberg S.L."/>
            <person name="White O."/>
            <person name="Venter J.C."/>
            <person name="Fraser C.M."/>
            <person name="Kaneko T."/>
            <person name="Nakamura Y."/>
            <person name="Sato S."/>
            <person name="Kato T."/>
            <person name="Asamizu E."/>
            <person name="Sasamoto S."/>
            <person name="Kimura T."/>
            <person name="Idesawa K."/>
            <person name="Kawashima K."/>
            <person name="Kishida Y."/>
            <person name="Kiyokawa C."/>
            <person name="Kohara M."/>
            <person name="Matsumoto M."/>
            <person name="Matsuno A."/>
            <person name="Muraki A."/>
            <person name="Nakayama S."/>
            <person name="Nakazaki N."/>
            <person name="Shinpo S."/>
            <person name="Takeuchi C."/>
            <person name="Wada T."/>
            <person name="Watanabe A."/>
            <person name="Yamada M."/>
            <person name="Yasuda M."/>
            <person name="Tabata S."/>
        </authorList>
    </citation>
    <scope>NUCLEOTIDE SEQUENCE [LARGE SCALE GENOMIC DNA]</scope>
    <source>
        <strain>cv. Columbia</strain>
    </source>
</reference>
<reference key="2">
    <citation type="journal article" date="2017" name="Plant J.">
        <title>Araport11: a complete reannotation of the Arabidopsis thaliana reference genome.</title>
        <authorList>
            <person name="Cheng C.Y."/>
            <person name="Krishnakumar V."/>
            <person name="Chan A.P."/>
            <person name="Thibaud-Nissen F."/>
            <person name="Schobel S."/>
            <person name="Town C.D."/>
        </authorList>
    </citation>
    <scope>GENOME REANNOTATION</scope>
    <source>
        <strain>cv. Columbia</strain>
    </source>
</reference>
<reference key="3">
    <citation type="journal article" date="2002" name="Science">
        <title>Functional annotation of a full-length Arabidopsis cDNA collection.</title>
        <authorList>
            <person name="Seki M."/>
            <person name="Narusaka M."/>
            <person name="Kamiya A."/>
            <person name="Ishida J."/>
            <person name="Satou M."/>
            <person name="Sakurai T."/>
            <person name="Nakajima M."/>
            <person name="Enju A."/>
            <person name="Akiyama K."/>
            <person name="Oono Y."/>
            <person name="Muramatsu M."/>
            <person name="Hayashizaki Y."/>
            <person name="Kawai J."/>
            <person name="Carninci P."/>
            <person name="Itoh M."/>
            <person name="Ishii Y."/>
            <person name="Arakawa T."/>
            <person name="Shibata K."/>
            <person name="Shinagawa A."/>
            <person name="Shinozaki K."/>
        </authorList>
    </citation>
    <scope>NUCLEOTIDE SEQUENCE [LARGE SCALE MRNA]</scope>
    <source>
        <strain>cv. Columbia</strain>
    </source>
</reference>
<reference key="4">
    <citation type="journal article" date="2003" name="Science">
        <title>Empirical analysis of transcriptional activity in the Arabidopsis genome.</title>
        <authorList>
            <person name="Yamada K."/>
            <person name="Lim J."/>
            <person name="Dale J.M."/>
            <person name="Chen H."/>
            <person name="Shinn P."/>
            <person name="Palm C.J."/>
            <person name="Southwick A.M."/>
            <person name="Wu H.C."/>
            <person name="Kim C.J."/>
            <person name="Nguyen M."/>
            <person name="Pham P.K."/>
            <person name="Cheuk R.F."/>
            <person name="Karlin-Newmann G."/>
            <person name="Liu S.X."/>
            <person name="Lam B."/>
            <person name="Sakano H."/>
            <person name="Wu T."/>
            <person name="Yu G."/>
            <person name="Miranda M."/>
            <person name="Quach H.L."/>
            <person name="Tripp M."/>
            <person name="Chang C.H."/>
            <person name="Lee J.M."/>
            <person name="Toriumi M.J."/>
            <person name="Chan M.M."/>
            <person name="Tang C.C."/>
            <person name="Onodera C.S."/>
            <person name="Deng J.M."/>
            <person name="Akiyama K."/>
            <person name="Ansari Y."/>
            <person name="Arakawa T."/>
            <person name="Banh J."/>
            <person name="Banno F."/>
            <person name="Bowser L."/>
            <person name="Brooks S.Y."/>
            <person name="Carninci P."/>
            <person name="Chao Q."/>
            <person name="Choy N."/>
            <person name="Enju A."/>
            <person name="Goldsmith A.D."/>
            <person name="Gurjal M."/>
            <person name="Hansen N.F."/>
            <person name="Hayashizaki Y."/>
            <person name="Johnson-Hopson C."/>
            <person name="Hsuan V.W."/>
            <person name="Iida K."/>
            <person name="Karnes M."/>
            <person name="Khan S."/>
            <person name="Koesema E."/>
            <person name="Ishida J."/>
            <person name="Jiang P.X."/>
            <person name="Jones T."/>
            <person name="Kawai J."/>
            <person name="Kamiya A."/>
            <person name="Meyers C."/>
            <person name="Nakajima M."/>
            <person name="Narusaka M."/>
            <person name="Seki M."/>
            <person name="Sakurai T."/>
            <person name="Satou M."/>
            <person name="Tamse R."/>
            <person name="Vaysberg M."/>
            <person name="Wallender E.K."/>
            <person name="Wong C."/>
            <person name="Yamamura Y."/>
            <person name="Yuan S."/>
            <person name="Shinozaki K."/>
            <person name="Davis R.W."/>
            <person name="Theologis A."/>
            <person name="Ecker J.R."/>
        </authorList>
    </citation>
    <scope>NUCLEOTIDE SEQUENCE [LARGE SCALE MRNA]</scope>
    <source>
        <strain>cv. Columbia</strain>
    </source>
</reference>
<reference key="5">
    <citation type="journal article" date="2001" name="J. Biol. Chem.">
        <title>Phylogenetic analysis of the UDP-glycosyltransferase multigene family of Arabidopsis thaliana.</title>
        <authorList>
            <person name="Li Y."/>
            <person name="Baldauf S."/>
            <person name="Lim E.K."/>
            <person name="Bowles D.J."/>
        </authorList>
    </citation>
    <scope>GENE FAMILY</scope>
</reference>
<comment type="similarity">
    <text evidence="2">Belongs to the UDP-glycosyltransferase family.</text>
</comment>
<accession>Q9STE3</accession>
<accession>Q8GZ65</accession>
<organism>
    <name type="scientific">Arabidopsis thaliana</name>
    <name type="common">Mouse-ear cress</name>
    <dbReference type="NCBI Taxonomy" id="3702"/>
    <lineage>
        <taxon>Eukaryota</taxon>
        <taxon>Viridiplantae</taxon>
        <taxon>Streptophyta</taxon>
        <taxon>Embryophyta</taxon>
        <taxon>Tracheophyta</taxon>
        <taxon>Spermatophyta</taxon>
        <taxon>Magnoliopsida</taxon>
        <taxon>eudicotyledons</taxon>
        <taxon>Gunneridae</taxon>
        <taxon>Pentapetalae</taxon>
        <taxon>rosids</taxon>
        <taxon>malvids</taxon>
        <taxon>Brassicales</taxon>
        <taxon>Brassicaceae</taxon>
        <taxon>Camelineae</taxon>
        <taxon>Arabidopsis</taxon>
    </lineage>
</organism>
<evidence type="ECO:0000250" key="1"/>
<evidence type="ECO:0000305" key="2"/>
<protein>
    <recommendedName>
        <fullName>UDP-glycosyltransferase 76E4</fullName>
        <ecNumber>2.4.1.-</ecNumber>
    </recommendedName>
</protein>